<name>UGPC_CERS4</name>
<evidence type="ECO:0000255" key="1">
    <source>
        <dbReference type="HAMAP-Rule" id="MF_01727"/>
    </source>
</evidence>
<sequence length="349" mass="38082">MAEISLRDVRKSYAGIEVIHGVDFEIADGEFVVIVGPSGCGKSTLLRMVAGLEEITAGEIAIGGRVVNRLEPRERDIAMVFQNYALYPHMTVRENMAYGLRIAKLSKAEIEERVARSATMLELGQLLDRKPRQLSGGQRQRVAMGRALVRNPAAFLLDEPLSNLDAKLRVQMRLQIKELQRTVRTTSIYVTHDQVEAMTLADRLVVMNAGVAEQIATPAEIYDRPATTFVAGFIGSPAMNMLPARGLGDALEVAGQRLAVPAPAGRDLILGVRPEHLHAAGPEEPGFELHVQAVEWLGADAFAHGRLADGTELVLRTPGKAPVRERDRLKVAPDAAALHLFDAETGRRL</sequence>
<proteinExistence type="inferred from homology"/>
<accession>Q3IX40</accession>
<keyword id="KW-0067">ATP-binding</keyword>
<keyword id="KW-0997">Cell inner membrane</keyword>
<keyword id="KW-1003">Cell membrane</keyword>
<keyword id="KW-0472">Membrane</keyword>
<keyword id="KW-0547">Nucleotide-binding</keyword>
<keyword id="KW-1185">Reference proteome</keyword>
<keyword id="KW-0762">Sugar transport</keyword>
<keyword id="KW-1278">Translocase</keyword>
<keyword id="KW-0813">Transport</keyword>
<protein>
    <recommendedName>
        <fullName evidence="1">sn-glycerol-3-phosphate import ATP-binding protein UgpC</fullName>
        <ecNumber evidence="1">7.6.2.10</ecNumber>
    </recommendedName>
</protein>
<feature type="chain" id="PRO_0000289770" description="sn-glycerol-3-phosphate import ATP-binding protein UgpC">
    <location>
        <begin position="1"/>
        <end position="349"/>
    </location>
</feature>
<feature type="domain" description="ABC transporter" evidence="1">
    <location>
        <begin position="4"/>
        <end position="234"/>
    </location>
</feature>
<feature type="binding site" evidence="1">
    <location>
        <begin position="36"/>
        <end position="43"/>
    </location>
    <ligand>
        <name>ATP</name>
        <dbReference type="ChEBI" id="CHEBI:30616"/>
    </ligand>
</feature>
<reference key="1">
    <citation type="submission" date="2005-09" db="EMBL/GenBank/DDBJ databases">
        <title>Complete sequence of chromosome 2 of Rhodobacter sphaeroides 2.4.1.</title>
        <authorList>
            <person name="Copeland A."/>
            <person name="Lucas S."/>
            <person name="Lapidus A."/>
            <person name="Barry K."/>
            <person name="Detter J.C."/>
            <person name="Glavina T."/>
            <person name="Hammon N."/>
            <person name="Israni S."/>
            <person name="Pitluck S."/>
            <person name="Richardson P."/>
            <person name="Mackenzie C."/>
            <person name="Choudhary M."/>
            <person name="Larimer F."/>
            <person name="Hauser L.J."/>
            <person name="Land M."/>
            <person name="Donohue T.J."/>
            <person name="Kaplan S."/>
        </authorList>
    </citation>
    <scope>NUCLEOTIDE SEQUENCE [LARGE SCALE GENOMIC DNA]</scope>
    <source>
        <strain>ATCC 17023 / DSM 158 / JCM 6121 / CCUG 31486 / LMG 2827 / NBRC 12203 / NCIMB 8253 / ATH 2.4.1.</strain>
    </source>
</reference>
<gene>
    <name evidence="1" type="primary">ugpC</name>
    <name type="ordered locus">RHOS4_33260</name>
    <name type="ORF">RSP_3287</name>
</gene>
<organism>
    <name type="scientific">Cereibacter sphaeroides (strain ATCC 17023 / DSM 158 / JCM 6121 / CCUG 31486 / LMG 2827 / NBRC 12203 / NCIMB 8253 / ATH 2.4.1.)</name>
    <name type="common">Rhodobacter sphaeroides</name>
    <dbReference type="NCBI Taxonomy" id="272943"/>
    <lineage>
        <taxon>Bacteria</taxon>
        <taxon>Pseudomonadati</taxon>
        <taxon>Pseudomonadota</taxon>
        <taxon>Alphaproteobacteria</taxon>
        <taxon>Rhodobacterales</taxon>
        <taxon>Paracoccaceae</taxon>
        <taxon>Cereibacter</taxon>
    </lineage>
</organism>
<dbReference type="EC" id="7.6.2.10" evidence="1"/>
<dbReference type="EMBL" id="CP000144">
    <property type="protein sequence ID" value="ABA80894.1"/>
    <property type="molecule type" value="Genomic_DNA"/>
</dbReference>
<dbReference type="RefSeq" id="WP_011339184.1">
    <property type="nucleotide sequence ID" value="NC_007494.2"/>
</dbReference>
<dbReference type="RefSeq" id="YP_354795.1">
    <property type="nucleotide sequence ID" value="NC_007494.2"/>
</dbReference>
<dbReference type="SMR" id="Q3IX40"/>
<dbReference type="STRING" id="272943.RSP_3287"/>
<dbReference type="EnsemblBacteria" id="ABA80894">
    <property type="protein sequence ID" value="ABA80894"/>
    <property type="gene ID" value="RSP_3287"/>
</dbReference>
<dbReference type="GeneID" id="3721887"/>
<dbReference type="KEGG" id="rsp:RSP_3287"/>
<dbReference type="PATRIC" id="fig|272943.9.peg.3714"/>
<dbReference type="eggNOG" id="COG3842">
    <property type="taxonomic scope" value="Bacteria"/>
</dbReference>
<dbReference type="OrthoDB" id="9802264at2"/>
<dbReference type="PhylomeDB" id="Q3IX40"/>
<dbReference type="Proteomes" id="UP000002703">
    <property type="component" value="Chromosome 2"/>
</dbReference>
<dbReference type="GO" id="GO:0055052">
    <property type="term" value="C:ATP-binding cassette (ABC) transporter complex, substrate-binding subunit-containing"/>
    <property type="evidence" value="ECO:0007669"/>
    <property type="project" value="TreeGrafter"/>
</dbReference>
<dbReference type="GO" id="GO:0015430">
    <property type="term" value="F:ABC-type glycerol-3-phosphate transporter activity"/>
    <property type="evidence" value="ECO:0007669"/>
    <property type="project" value="UniProtKB-EC"/>
</dbReference>
<dbReference type="GO" id="GO:0005524">
    <property type="term" value="F:ATP binding"/>
    <property type="evidence" value="ECO:0007669"/>
    <property type="project" value="UniProtKB-KW"/>
</dbReference>
<dbReference type="GO" id="GO:0016887">
    <property type="term" value="F:ATP hydrolysis activity"/>
    <property type="evidence" value="ECO:0007669"/>
    <property type="project" value="InterPro"/>
</dbReference>
<dbReference type="GO" id="GO:0008643">
    <property type="term" value="P:carbohydrate transport"/>
    <property type="evidence" value="ECO:0007669"/>
    <property type="project" value="InterPro"/>
</dbReference>
<dbReference type="GO" id="GO:0001407">
    <property type="term" value="P:glycerophosphodiester transmembrane transport"/>
    <property type="evidence" value="ECO:0007669"/>
    <property type="project" value="TreeGrafter"/>
</dbReference>
<dbReference type="CDD" id="cd03301">
    <property type="entry name" value="ABC_MalK_N"/>
    <property type="match status" value="1"/>
</dbReference>
<dbReference type="FunFam" id="3.40.50.300:FF:000042">
    <property type="entry name" value="Maltose/maltodextrin ABC transporter, ATP-binding protein"/>
    <property type="match status" value="1"/>
</dbReference>
<dbReference type="Gene3D" id="2.40.50.100">
    <property type="match status" value="1"/>
</dbReference>
<dbReference type="Gene3D" id="2.40.50.140">
    <property type="entry name" value="Nucleic acid-binding proteins"/>
    <property type="match status" value="1"/>
</dbReference>
<dbReference type="Gene3D" id="3.40.50.300">
    <property type="entry name" value="P-loop containing nucleotide triphosphate hydrolases"/>
    <property type="match status" value="1"/>
</dbReference>
<dbReference type="InterPro" id="IPR003593">
    <property type="entry name" value="AAA+_ATPase"/>
</dbReference>
<dbReference type="InterPro" id="IPR003439">
    <property type="entry name" value="ABC_transporter-like_ATP-bd"/>
</dbReference>
<dbReference type="InterPro" id="IPR017871">
    <property type="entry name" value="ABC_transporter-like_CS"/>
</dbReference>
<dbReference type="InterPro" id="IPR015855">
    <property type="entry name" value="ABC_transpr_MalK-like"/>
</dbReference>
<dbReference type="InterPro" id="IPR047641">
    <property type="entry name" value="ABC_transpr_MalK/UgpC-like"/>
</dbReference>
<dbReference type="InterPro" id="IPR008995">
    <property type="entry name" value="Mo/tungstate-bd_C_term_dom"/>
</dbReference>
<dbReference type="InterPro" id="IPR012340">
    <property type="entry name" value="NA-bd_OB-fold"/>
</dbReference>
<dbReference type="InterPro" id="IPR027417">
    <property type="entry name" value="P-loop_NTPase"/>
</dbReference>
<dbReference type="InterPro" id="IPR013611">
    <property type="entry name" value="Transp-assoc_OB_typ2"/>
</dbReference>
<dbReference type="NCBIfam" id="NF008653">
    <property type="entry name" value="PRK11650.1"/>
    <property type="match status" value="1"/>
</dbReference>
<dbReference type="PANTHER" id="PTHR43875">
    <property type="entry name" value="MALTODEXTRIN IMPORT ATP-BINDING PROTEIN MSMX"/>
    <property type="match status" value="1"/>
</dbReference>
<dbReference type="PANTHER" id="PTHR43875:SF12">
    <property type="entry name" value="SN-GLYCEROL-3-PHOSPHATE IMPORT ATP-BINDING PROTEIN UGPC"/>
    <property type="match status" value="1"/>
</dbReference>
<dbReference type="Pfam" id="PF00005">
    <property type="entry name" value="ABC_tran"/>
    <property type="match status" value="1"/>
</dbReference>
<dbReference type="Pfam" id="PF08402">
    <property type="entry name" value="TOBE_2"/>
    <property type="match status" value="1"/>
</dbReference>
<dbReference type="SMART" id="SM00382">
    <property type="entry name" value="AAA"/>
    <property type="match status" value="1"/>
</dbReference>
<dbReference type="SUPFAM" id="SSF50331">
    <property type="entry name" value="MOP-like"/>
    <property type="match status" value="1"/>
</dbReference>
<dbReference type="SUPFAM" id="SSF52540">
    <property type="entry name" value="P-loop containing nucleoside triphosphate hydrolases"/>
    <property type="match status" value="1"/>
</dbReference>
<dbReference type="PROSITE" id="PS00211">
    <property type="entry name" value="ABC_TRANSPORTER_1"/>
    <property type="match status" value="1"/>
</dbReference>
<dbReference type="PROSITE" id="PS50893">
    <property type="entry name" value="ABC_TRANSPORTER_2"/>
    <property type="match status" value="1"/>
</dbReference>
<dbReference type="PROSITE" id="PS51315">
    <property type="entry name" value="UGPC"/>
    <property type="match status" value="1"/>
</dbReference>
<comment type="function">
    <text evidence="1">Part of the ABC transporter complex UgpBAEC involved in sn-glycerol-3-phosphate (G3P) import. Responsible for energy coupling to the transport system.</text>
</comment>
<comment type="catalytic activity">
    <reaction evidence="1">
        <text>sn-glycerol 3-phosphate(out) + ATP + H2O = sn-glycerol 3-phosphate(in) + ADP + phosphate + H(+)</text>
        <dbReference type="Rhea" id="RHEA:21668"/>
        <dbReference type="ChEBI" id="CHEBI:15377"/>
        <dbReference type="ChEBI" id="CHEBI:15378"/>
        <dbReference type="ChEBI" id="CHEBI:30616"/>
        <dbReference type="ChEBI" id="CHEBI:43474"/>
        <dbReference type="ChEBI" id="CHEBI:57597"/>
        <dbReference type="ChEBI" id="CHEBI:456216"/>
        <dbReference type="EC" id="7.6.2.10"/>
    </reaction>
</comment>
<comment type="subunit">
    <text evidence="1">The complex is composed of two ATP-binding proteins (UgpC), two transmembrane proteins (UgpA and UgpE) and a solute-binding protein (UgpB).</text>
</comment>
<comment type="subcellular location">
    <subcellularLocation>
        <location evidence="1">Cell inner membrane</location>
        <topology evidence="1">Peripheral membrane protein</topology>
    </subcellularLocation>
</comment>
<comment type="similarity">
    <text evidence="1">Belongs to the ABC transporter superfamily. sn-glycerol-3-phosphate importer (TC 3.A.1.1.3) family.</text>
</comment>